<organism>
    <name type="scientific">Actinobacillus pleuropneumoniae serotype 5b (strain L20)</name>
    <dbReference type="NCBI Taxonomy" id="416269"/>
    <lineage>
        <taxon>Bacteria</taxon>
        <taxon>Pseudomonadati</taxon>
        <taxon>Pseudomonadota</taxon>
        <taxon>Gammaproteobacteria</taxon>
        <taxon>Pasteurellales</taxon>
        <taxon>Pasteurellaceae</taxon>
        <taxon>Actinobacillus</taxon>
    </lineage>
</organism>
<sequence length="199" mass="22250">MEQQETIHISISEAAQTHFRRLLEQQEENTNIRIFVVNPGTPNAECGVSYCPPNAVEETDTQFEYNGFSAFVDEISLPFLDEAEIDYVTDPMGSQLTLKAPNAKMRKVADDAPFIERLDYVIQTQVNPQLASHGGRVTLIEVTEDKYAILQFGGGCNGCSMVDVTLKEGIEKQLLAMFPDELAGVKDVTEHQRGEHSYY</sequence>
<gene>
    <name evidence="1" type="primary">nfuA</name>
    <name type="ordered locus">APL_0149</name>
</gene>
<dbReference type="EMBL" id="CP000569">
    <property type="protein sequence ID" value="ABN73257.1"/>
    <property type="molecule type" value="Genomic_DNA"/>
</dbReference>
<dbReference type="RefSeq" id="WP_005600176.1">
    <property type="nucleotide sequence ID" value="NC_009053.1"/>
</dbReference>
<dbReference type="SMR" id="A3MYM1"/>
<dbReference type="STRING" id="416269.APL_0149"/>
<dbReference type="EnsemblBacteria" id="ABN73257">
    <property type="protein sequence ID" value="ABN73257"/>
    <property type="gene ID" value="APL_0149"/>
</dbReference>
<dbReference type="KEGG" id="apl:APL_0149"/>
<dbReference type="eggNOG" id="COG0316">
    <property type="taxonomic scope" value="Bacteria"/>
</dbReference>
<dbReference type="eggNOG" id="COG0694">
    <property type="taxonomic scope" value="Bacteria"/>
</dbReference>
<dbReference type="HOGENOM" id="CLU_094569_0_0_6"/>
<dbReference type="Proteomes" id="UP000001432">
    <property type="component" value="Chromosome"/>
</dbReference>
<dbReference type="GO" id="GO:0051539">
    <property type="term" value="F:4 iron, 4 sulfur cluster binding"/>
    <property type="evidence" value="ECO:0007669"/>
    <property type="project" value="UniProtKB-UniRule"/>
</dbReference>
<dbReference type="GO" id="GO:0005506">
    <property type="term" value="F:iron ion binding"/>
    <property type="evidence" value="ECO:0007669"/>
    <property type="project" value="InterPro"/>
</dbReference>
<dbReference type="GO" id="GO:0016226">
    <property type="term" value="P:iron-sulfur cluster assembly"/>
    <property type="evidence" value="ECO:0007669"/>
    <property type="project" value="UniProtKB-UniRule"/>
</dbReference>
<dbReference type="GO" id="GO:0051604">
    <property type="term" value="P:protein maturation"/>
    <property type="evidence" value="ECO:0007669"/>
    <property type="project" value="UniProtKB-UniRule"/>
</dbReference>
<dbReference type="Gene3D" id="3.30.300.130">
    <property type="entry name" value="Fe-S cluster assembly (FSCA)"/>
    <property type="match status" value="1"/>
</dbReference>
<dbReference type="Gene3D" id="2.60.300.12">
    <property type="entry name" value="HesB-like domain"/>
    <property type="match status" value="1"/>
</dbReference>
<dbReference type="HAMAP" id="MF_01637">
    <property type="entry name" value="Fe_S_biogen_NfuA"/>
    <property type="match status" value="1"/>
</dbReference>
<dbReference type="InterPro" id="IPR017726">
    <property type="entry name" value="Fe/S_biogenesis_protein_NfuA"/>
</dbReference>
<dbReference type="InterPro" id="IPR000361">
    <property type="entry name" value="FeS_biogenesis"/>
</dbReference>
<dbReference type="InterPro" id="IPR034904">
    <property type="entry name" value="FSCA_dom_sf"/>
</dbReference>
<dbReference type="InterPro" id="IPR035903">
    <property type="entry name" value="HesB-like_dom_sf"/>
</dbReference>
<dbReference type="InterPro" id="IPR001075">
    <property type="entry name" value="NIF_FeS_clus_asmbl_NifU_C"/>
</dbReference>
<dbReference type="NCBIfam" id="NF008392">
    <property type="entry name" value="PRK11190.1"/>
    <property type="match status" value="1"/>
</dbReference>
<dbReference type="NCBIfam" id="TIGR03341">
    <property type="entry name" value="YhgI_GntY"/>
    <property type="match status" value="1"/>
</dbReference>
<dbReference type="PANTHER" id="PTHR11178:SF51">
    <property type="entry name" value="FE_S BIOGENESIS PROTEIN NFUA"/>
    <property type="match status" value="1"/>
</dbReference>
<dbReference type="PANTHER" id="PTHR11178">
    <property type="entry name" value="IRON-SULFUR CLUSTER SCAFFOLD PROTEIN NFU-RELATED"/>
    <property type="match status" value="1"/>
</dbReference>
<dbReference type="Pfam" id="PF01521">
    <property type="entry name" value="Fe-S_biosyn"/>
    <property type="match status" value="1"/>
</dbReference>
<dbReference type="Pfam" id="PF01106">
    <property type="entry name" value="NifU"/>
    <property type="match status" value="1"/>
</dbReference>
<dbReference type="SUPFAM" id="SSF117916">
    <property type="entry name" value="Fe-S cluster assembly (FSCA) domain-like"/>
    <property type="match status" value="1"/>
</dbReference>
<dbReference type="SUPFAM" id="SSF89360">
    <property type="entry name" value="HesB-like domain"/>
    <property type="match status" value="1"/>
</dbReference>
<proteinExistence type="inferred from homology"/>
<protein>
    <recommendedName>
        <fullName evidence="1">Fe/S biogenesis protein NfuA</fullName>
    </recommendedName>
</protein>
<feature type="chain" id="PRO_0000292086" description="Fe/S biogenesis protein NfuA">
    <location>
        <begin position="1"/>
        <end position="199"/>
    </location>
</feature>
<feature type="binding site" evidence="1">
    <location>
        <position position="156"/>
    </location>
    <ligand>
        <name>[4Fe-4S] cluster</name>
        <dbReference type="ChEBI" id="CHEBI:49883"/>
    </ligand>
</feature>
<feature type="binding site" evidence="1">
    <location>
        <position position="159"/>
    </location>
    <ligand>
        <name>[4Fe-4S] cluster</name>
        <dbReference type="ChEBI" id="CHEBI:49883"/>
    </ligand>
</feature>
<comment type="function">
    <text evidence="1">Involved in iron-sulfur cluster biogenesis. Binds a 4Fe-4S cluster, can transfer this cluster to apoproteins, and thereby intervenes in the maturation of Fe/S proteins. Could also act as a scaffold/chaperone for damaged Fe/S proteins.</text>
</comment>
<comment type="cofactor">
    <cofactor evidence="1">
        <name>[4Fe-4S] cluster</name>
        <dbReference type="ChEBI" id="CHEBI:49883"/>
    </cofactor>
    <text evidence="1">Binds 1 [4Fe-4S] cluster per subunit. The cluster is presumably bound at the interface of two monomers.</text>
</comment>
<comment type="subunit">
    <text evidence="1">Homodimer.</text>
</comment>
<comment type="similarity">
    <text evidence="1">Belongs to the NfuA family.</text>
</comment>
<keyword id="KW-0004">4Fe-4S</keyword>
<keyword id="KW-0408">Iron</keyword>
<keyword id="KW-0411">Iron-sulfur</keyword>
<keyword id="KW-0479">Metal-binding</keyword>
<keyword id="KW-1185">Reference proteome</keyword>
<reference key="1">
    <citation type="journal article" date="2008" name="J. Bacteriol.">
        <title>The complete genome sequence of Actinobacillus pleuropneumoniae L20 (serotype 5b).</title>
        <authorList>
            <person name="Foote S.J."/>
            <person name="Bosse J.T."/>
            <person name="Bouevitch A.B."/>
            <person name="Langford P.R."/>
            <person name="Young N.M."/>
            <person name="Nash J.H.E."/>
        </authorList>
    </citation>
    <scope>NUCLEOTIDE SEQUENCE [LARGE SCALE GENOMIC DNA]</scope>
    <source>
        <strain>L20</strain>
    </source>
</reference>
<accession>A3MYM1</accession>
<name>NFUA_ACTP2</name>
<evidence type="ECO:0000255" key="1">
    <source>
        <dbReference type="HAMAP-Rule" id="MF_01637"/>
    </source>
</evidence>